<reference key="1">
    <citation type="journal article" date="2000" name="Science">
        <title>Complete genome sequence of Neisseria meningitidis serogroup B strain MC58.</title>
        <authorList>
            <person name="Tettelin H."/>
            <person name="Saunders N.J."/>
            <person name="Heidelberg J.F."/>
            <person name="Jeffries A.C."/>
            <person name="Nelson K.E."/>
            <person name="Eisen J.A."/>
            <person name="Ketchum K.A."/>
            <person name="Hood D.W."/>
            <person name="Peden J.F."/>
            <person name="Dodson R.J."/>
            <person name="Nelson W.C."/>
            <person name="Gwinn M.L."/>
            <person name="DeBoy R.T."/>
            <person name="Peterson J.D."/>
            <person name="Hickey E.K."/>
            <person name="Haft D.H."/>
            <person name="Salzberg S.L."/>
            <person name="White O."/>
            <person name="Fleischmann R.D."/>
            <person name="Dougherty B.A."/>
            <person name="Mason T.M."/>
            <person name="Ciecko A."/>
            <person name="Parksey D.S."/>
            <person name="Blair E."/>
            <person name="Cittone H."/>
            <person name="Clark E.B."/>
            <person name="Cotton M.D."/>
            <person name="Utterback T.R."/>
            <person name="Khouri H.M."/>
            <person name="Qin H."/>
            <person name="Vamathevan J.J."/>
            <person name="Gill J."/>
            <person name="Scarlato V."/>
            <person name="Masignani V."/>
            <person name="Pizza M."/>
            <person name="Grandi G."/>
            <person name="Sun L."/>
            <person name="Smith H.O."/>
            <person name="Fraser C.M."/>
            <person name="Moxon E.R."/>
            <person name="Rappuoli R."/>
            <person name="Venter J.C."/>
        </authorList>
    </citation>
    <scope>NUCLEOTIDE SEQUENCE [LARGE SCALE GENOMIC DNA]</scope>
    <source>
        <strain>ATCC BAA-335 / MC58</strain>
    </source>
</reference>
<evidence type="ECO:0000255" key="1">
    <source>
        <dbReference type="HAMAP-Rule" id="MF_01855"/>
    </source>
</evidence>
<proteinExistence type="inferred from homology"/>
<name>F16PA_NEIMB</name>
<organism>
    <name type="scientific">Neisseria meningitidis serogroup B (strain ATCC BAA-335 / MC58)</name>
    <dbReference type="NCBI Taxonomy" id="122586"/>
    <lineage>
        <taxon>Bacteria</taxon>
        <taxon>Pseudomonadati</taxon>
        <taxon>Pseudomonadota</taxon>
        <taxon>Betaproteobacteria</taxon>
        <taxon>Neisseriales</taxon>
        <taxon>Neisseriaceae</taxon>
        <taxon>Neisseria</taxon>
    </lineage>
</organism>
<protein>
    <recommendedName>
        <fullName evidence="1">Fructose-1,6-bisphosphatase class 1</fullName>
        <shortName evidence="1">FBPase class 1</shortName>
        <ecNumber evidence="1">3.1.3.11</ecNumber>
    </recommendedName>
    <alternativeName>
        <fullName evidence="1">D-fructose-1,6-bisphosphate 1-phosphohydrolase class 1</fullName>
    </alternativeName>
</protein>
<gene>
    <name evidence="1" type="primary">fbp</name>
    <name type="ordered locus">NMB1060</name>
</gene>
<comment type="catalytic activity">
    <reaction evidence="1">
        <text>beta-D-fructose 1,6-bisphosphate + H2O = beta-D-fructose 6-phosphate + phosphate</text>
        <dbReference type="Rhea" id="RHEA:11064"/>
        <dbReference type="ChEBI" id="CHEBI:15377"/>
        <dbReference type="ChEBI" id="CHEBI:32966"/>
        <dbReference type="ChEBI" id="CHEBI:43474"/>
        <dbReference type="ChEBI" id="CHEBI:57634"/>
        <dbReference type="EC" id="3.1.3.11"/>
    </reaction>
</comment>
<comment type="cofactor">
    <cofactor evidence="1">
        <name>Mg(2+)</name>
        <dbReference type="ChEBI" id="CHEBI:18420"/>
    </cofactor>
    <text evidence="1">Binds 2 magnesium ions per subunit.</text>
</comment>
<comment type="pathway">
    <text evidence="1">Carbohydrate biosynthesis; gluconeogenesis.</text>
</comment>
<comment type="subunit">
    <text evidence="1">Homotetramer.</text>
</comment>
<comment type="subcellular location">
    <subcellularLocation>
        <location evidence="1">Cytoplasm</location>
    </subcellularLocation>
</comment>
<comment type="similarity">
    <text evidence="1">Belongs to the FBPase class 1 family.</text>
</comment>
<sequence length="324" mass="35581">MDTLTRFLPEHLQQNQLPEALGGVLLSVVSACTEINAKVRLGALAGVLGMAGTGNIQGEDQKKLDVIANNIMIDTLKANSAVAGLASEEEDTFVNAGENGRYLVLFDPLDGSSNIDVNISVGTIFSILEKPEGALATESFLQTGRQQLAAGYVLYGPQTQLVFTFGHGVYMFTLNAENEFVLTKENPKVPESTKEFAINMSNRRHWLPPVQQYIDELLAGETGTRGKNYNMRWVASMVAEIHRILMRGGVFMYPQDKRDPAKPGKLRLMYEANPMSLILEQAGASASNAYQAMLDIQPENLHQRVAVFMGSSEEVAYLDRLHAK</sequence>
<dbReference type="EC" id="3.1.3.11" evidence="1"/>
<dbReference type="EMBL" id="AE002098">
    <property type="protein sequence ID" value="AAF41456.1"/>
    <property type="molecule type" value="Genomic_DNA"/>
</dbReference>
<dbReference type="PIR" id="F81126">
    <property type="entry name" value="F81126"/>
</dbReference>
<dbReference type="RefSeq" id="NP_274093.1">
    <property type="nucleotide sequence ID" value="NC_003112.2"/>
</dbReference>
<dbReference type="RefSeq" id="WP_002244111.1">
    <property type="nucleotide sequence ID" value="NC_003112.2"/>
</dbReference>
<dbReference type="SMR" id="Q9JZH1"/>
<dbReference type="FunCoup" id="Q9JZH1">
    <property type="interactions" value="390"/>
</dbReference>
<dbReference type="STRING" id="122586.NMB1060"/>
<dbReference type="PaxDb" id="122586-NMB1060"/>
<dbReference type="KEGG" id="nme:NMB1060"/>
<dbReference type="PATRIC" id="fig|122586.8.peg.1348"/>
<dbReference type="HOGENOM" id="CLU_039977_0_0_4"/>
<dbReference type="InParanoid" id="Q9JZH1"/>
<dbReference type="OrthoDB" id="9806756at2"/>
<dbReference type="UniPathway" id="UPA00138"/>
<dbReference type="Proteomes" id="UP000000425">
    <property type="component" value="Chromosome"/>
</dbReference>
<dbReference type="GO" id="GO:0005737">
    <property type="term" value="C:cytoplasm"/>
    <property type="evidence" value="ECO:0000318"/>
    <property type="project" value="GO_Central"/>
</dbReference>
<dbReference type="GO" id="GO:0005829">
    <property type="term" value="C:cytosol"/>
    <property type="evidence" value="ECO:0000318"/>
    <property type="project" value="GO_Central"/>
</dbReference>
<dbReference type="GO" id="GO:0042132">
    <property type="term" value="F:fructose 1,6-bisphosphate 1-phosphatase activity"/>
    <property type="evidence" value="ECO:0000318"/>
    <property type="project" value="GO_Central"/>
</dbReference>
<dbReference type="GO" id="GO:0000287">
    <property type="term" value="F:magnesium ion binding"/>
    <property type="evidence" value="ECO:0007669"/>
    <property type="project" value="UniProtKB-UniRule"/>
</dbReference>
<dbReference type="GO" id="GO:0030388">
    <property type="term" value="P:fructose 1,6-bisphosphate metabolic process"/>
    <property type="evidence" value="ECO:0000318"/>
    <property type="project" value="GO_Central"/>
</dbReference>
<dbReference type="GO" id="GO:0006002">
    <property type="term" value="P:fructose 6-phosphate metabolic process"/>
    <property type="evidence" value="ECO:0000318"/>
    <property type="project" value="GO_Central"/>
</dbReference>
<dbReference type="GO" id="GO:0006000">
    <property type="term" value="P:fructose metabolic process"/>
    <property type="evidence" value="ECO:0000318"/>
    <property type="project" value="GO_Central"/>
</dbReference>
<dbReference type="GO" id="GO:0006094">
    <property type="term" value="P:gluconeogenesis"/>
    <property type="evidence" value="ECO:0000318"/>
    <property type="project" value="GO_Central"/>
</dbReference>
<dbReference type="CDD" id="cd00354">
    <property type="entry name" value="FBPase"/>
    <property type="match status" value="1"/>
</dbReference>
<dbReference type="FunFam" id="3.30.540.10:FF:000006">
    <property type="entry name" value="Fructose-1,6-bisphosphatase class 1"/>
    <property type="match status" value="1"/>
</dbReference>
<dbReference type="FunFam" id="3.40.190.80:FF:000011">
    <property type="entry name" value="Fructose-1,6-bisphosphatase class 1"/>
    <property type="match status" value="1"/>
</dbReference>
<dbReference type="Gene3D" id="3.40.190.80">
    <property type="match status" value="1"/>
</dbReference>
<dbReference type="Gene3D" id="3.30.540.10">
    <property type="entry name" value="Fructose-1,6-Bisphosphatase, subunit A, domain 1"/>
    <property type="match status" value="1"/>
</dbReference>
<dbReference type="HAMAP" id="MF_01855">
    <property type="entry name" value="FBPase_class1"/>
    <property type="match status" value="1"/>
</dbReference>
<dbReference type="InterPro" id="IPR044015">
    <property type="entry name" value="FBPase_C_dom"/>
</dbReference>
<dbReference type="InterPro" id="IPR000146">
    <property type="entry name" value="FBPase_class-1"/>
</dbReference>
<dbReference type="InterPro" id="IPR033391">
    <property type="entry name" value="FBPase_N"/>
</dbReference>
<dbReference type="InterPro" id="IPR028343">
    <property type="entry name" value="FBPtase"/>
</dbReference>
<dbReference type="NCBIfam" id="NF006779">
    <property type="entry name" value="PRK09293.1-3"/>
    <property type="match status" value="1"/>
</dbReference>
<dbReference type="NCBIfam" id="NF006780">
    <property type="entry name" value="PRK09293.1-4"/>
    <property type="match status" value="1"/>
</dbReference>
<dbReference type="PANTHER" id="PTHR11556">
    <property type="entry name" value="FRUCTOSE-1,6-BISPHOSPHATASE-RELATED"/>
    <property type="match status" value="1"/>
</dbReference>
<dbReference type="PANTHER" id="PTHR11556:SF35">
    <property type="entry name" value="SEDOHEPTULOSE-1,7-BISPHOSPHATASE, CHLOROPLASTIC"/>
    <property type="match status" value="1"/>
</dbReference>
<dbReference type="Pfam" id="PF00316">
    <property type="entry name" value="FBPase"/>
    <property type="match status" value="1"/>
</dbReference>
<dbReference type="Pfam" id="PF18913">
    <property type="entry name" value="FBPase_C"/>
    <property type="match status" value="1"/>
</dbReference>
<dbReference type="PIRSF" id="PIRSF500210">
    <property type="entry name" value="FBPtase"/>
    <property type="match status" value="1"/>
</dbReference>
<dbReference type="PIRSF" id="PIRSF000904">
    <property type="entry name" value="FBPtase_SBPase"/>
    <property type="match status" value="1"/>
</dbReference>
<dbReference type="PRINTS" id="PR00115">
    <property type="entry name" value="F16BPHPHTASE"/>
</dbReference>
<dbReference type="SUPFAM" id="SSF56655">
    <property type="entry name" value="Carbohydrate phosphatase"/>
    <property type="match status" value="1"/>
</dbReference>
<feature type="chain" id="PRO_0000364608" description="Fructose-1,6-bisphosphatase class 1">
    <location>
        <begin position="1"/>
        <end position="324"/>
    </location>
</feature>
<feature type="binding site" evidence="1">
    <location>
        <position position="88"/>
    </location>
    <ligand>
        <name>Mg(2+)</name>
        <dbReference type="ChEBI" id="CHEBI:18420"/>
        <label>1</label>
    </ligand>
</feature>
<feature type="binding site" evidence="1">
    <location>
        <position position="107"/>
    </location>
    <ligand>
        <name>Mg(2+)</name>
        <dbReference type="ChEBI" id="CHEBI:18420"/>
        <label>1</label>
    </ligand>
</feature>
<feature type="binding site" evidence="1">
    <location>
        <position position="107"/>
    </location>
    <ligand>
        <name>Mg(2+)</name>
        <dbReference type="ChEBI" id="CHEBI:18420"/>
        <label>2</label>
    </ligand>
</feature>
<feature type="binding site" evidence="1">
    <location>
        <position position="109"/>
    </location>
    <ligand>
        <name>Mg(2+)</name>
        <dbReference type="ChEBI" id="CHEBI:18420"/>
        <label>1</label>
    </ligand>
</feature>
<feature type="binding site" evidence="1">
    <location>
        <begin position="110"/>
        <end position="113"/>
    </location>
    <ligand>
        <name>substrate</name>
    </ligand>
</feature>
<feature type="binding site" evidence="1">
    <location>
        <position position="110"/>
    </location>
    <ligand>
        <name>Mg(2+)</name>
        <dbReference type="ChEBI" id="CHEBI:18420"/>
        <label>2</label>
    </ligand>
</feature>
<feature type="binding site" evidence="1">
    <location>
        <position position="199"/>
    </location>
    <ligand>
        <name>substrate</name>
    </ligand>
</feature>
<feature type="binding site" evidence="1">
    <location>
        <position position="265"/>
    </location>
    <ligand>
        <name>substrate</name>
    </ligand>
</feature>
<feature type="binding site" evidence="1">
    <location>
        <position position="271"/>
    </location>
    <ligand>
        <name>Mg(2+)</name>
        <dbReference type="ChEBI" id="CHEBI:18420"/>
        <label>2</label>
    </ligand>
</feature>
<accession>Q9JZH1</accession>
<keyword id="KW-0119">Carbohydrate metabolism</keyword>
<keyword id="KW-0963">Cytoplasm</keyword>
<keyword id="KW-0378">Hydrolase</keyword>
<keyword id="KW-0460">Magnesium</keyword>
<keyword id="KW-0479">Metal-binding</keyword>
<keyword id="KW-1185">Reference proteome</keyword>